<comment type="function">
    <text evidence="1">Specifically methylates the N4 position of cytidine in position 1402 (C1402) of 16S rRNA.</text>
</comment>
<comment type="catalytic activity">
    <reaction evidence="1">
        <text>cytidine(1402) in 16S rRNA + S-adenosyl-L-methionine = N(4)-methylcytidine(1402) in 16S rRNA + S-adenosyl-L-homocysteine + H(+)</text>
        <dbReference type="Rhea" id="RHEA:42928"/>
        <dbReference type="Rhea" id="RHEA-COMP:10286"/>
        <dbReference type="Rhea" id="RHEA-COMP:10287"/>
        <dbReference type="ChEBI" id="CHEBI:15378"/>
        <dbReference type="ChEBI" id="CHEBI:57856"/>
        <dbReference type="ChEBI" id="CHEBI:59789"/>
        <dbReference type="ChEBI" id="CHEBI:74506"/>
        <dbReference type="ChEBI" id="CHEBI:82748"/>
        <dbReference type="EC" id="2.1.1.199"/>
    </reaction>
</comment>
<comment type="subcellular location">
    <subcellularLocation>
        <location evidence="1">Cytoplasm</location>
    </subcellularLocation>
</comment>
<comment type="similarity">
    <text evidence="1">Belongs to the methyltransferase superfamily. RsmH family.</text>
</comment>
<comment type="sequence caution" evidence="3">
    <conflict type="erroneous initiation">
        <sequence resource="EMBL-CDS" id="ABP78771"/>
    </conflict>
</comment>
<feature type="chain" id="PRO_0000387058" description="Ribosomal RNA small subunit methyltransferase H">
    <location>
        <begin position="1"/>
        <end position="315"/>
    </location>
</feature>
<feature type="region of interest" description="Disordered" evidence="2">
    <location>
        <begin position="296"/>
        <end position="315"/>
    </location>
</feature>
<feature type="binding site" evidence="1">
    <location>
        <begin position="37"/>
        <end position="39"/>
    </location>
    <ligand>
        <name>S-adenosyl-L-methionine</name>
        <dbReference type="ChEBI" id="CHEBI:59789"/>
    </ligand>
</feature>
<feature type="binding site" evidence="1">
    <location>
        <position position="57"/>
    </location>
    <ligand>
        <name>S-adenosyl-L-methionine</name>
        <dbReference type="ChEBI" id="CHEBI:59789"/>
    </ligand>
</feature>
<feature type="binding site" evidence="1">
    <location>
        <position position="83"/>
    </location>
    <ligand>
        <name>S-adenosyl-L-methionine</name>
        <dbReference type="ChEBI" id="CHEBI:59789"/>
    </ligand>
</feature>
<feature type="binding site" evidence="1">
    <location>
        <position position="105"/>
    </location>
    <ligand>
        <name>S-adenosyl-L-methionine</name>
        <dbReference type="ChEBI" id="CHEBI:59789"/>
    </ligand>
</feature>
<feature type="binding site" evidence="1">
    <location>
        <position position="112"/>
    </location>
    <ligand>
        <name>S-adenosyl-L-methionine</name>
        <dbReference type="ChEBI" id="CHEBI:59789"/>
    </ligand>
</feature>
<reference key="1">
    <citation type="journal article" date="2008" name="Proc. Natl. Acad. Sci. U.S.A.">
        <title>Nitrogen fixation island and rhizosphere competence traits in the genome of root-associated Pseudomonas stutzeri A1501.</title>
        <authorList>
            <person name="Yan Y."/>
            <person name="Yang J."/>
            <person name="Dou Y."/>
            <person name="Chen M."/>
            <person name="Ping S."/>
            <person name="Peng J."/>
            <person name="Lu W."/>
            <person name="Zhang W."/>
            <person name="Yao Z."/>
            <person name="Li H."/>
            <person name="Liu W."/>
            <person name="He S."/>
            <person name="Geng L."/>
            <person name="Zhang X."/>
            <person name="Yang F."/>
            <person name="Yu H."/>
            <person name="Zhan Y."/>
            <person name="Li D."/>
            <person name="Lin Z."/>
            <person name="Wang Y."/>
            <person name="Elmerich C."/>
            <person name="Lin M."/>
            <person name="Jin Q."/>
        </authorList>
    </citation>
    <scope>NUCLEOTIDE SEQUENCE [LARGE SCALE GENOMIC DNA]</scope>
    <source>
        <strain>A1501</strain>
    </source>
</reference>
<proteinExistence type="inferred from homology"/>
<sequence>MSQISSLRHITVLLDEAVAALNVRADGRYLDGTFGRGGHSRLLLQQLGPNGQLLGFDKDPLAIATGQALAAEDGRFVVVQRSFAELGDEVAQRGWTGAVSGILLDLGVSSPQLDDPIRGFSFLNDGPLDMRMDPSRGVSAAEWIASADEDEIARVFKDYGEERFAKRMARAVVQRRAEAPFERTADLAKVLTDANPAWEKGKSPATRAFQGLRIHINNELGDLERGLDAALDALEVGGRLVVISFHSLEDRIVKQFMRRHAKGEADKLPRDLPIIPKAFEPRLKLIGKPQYASEAEVKANPRSRSAVMRVAEKVR</sequence>
<evidence type="ECO:0000255" key="1">
    <source>
        <dbReference type="HAMAP-Rule" id="MF_01007"/>
    </source>
</evidence>
<evidence type="ECO:0000256" key="2">
    <source>
        <dbReference type="SAM" id="MobiDB-lite"/>
    </source>
</evidence>
<evidence type="ECO:0000305" key="3"/>
<gene>
    <name evidence="1" type="primary">rsmH</name>
    <name type="synonym">mraW</name>
    <name type="ordered locus">PST_1074</name>
</gene>
<dbReference type="EC" id="2.1.1.199" evidence="1"/>
<dbReference type="EMBL" id="CP000304">
    <property type="protein sequence ID" value="ABP78771.1"/>
    <property type="status" value="ALT_INIT"/>
    <property type="molecule type" value="Genomic_DNA"/>
</dbReference>
<dbReference type="RefSeq" id="WP_041755401.1">
    <property type="nucleotide sequence ID" value="NC_009434.1"/>
</dbReference>
<dbReference type="SMR" id="A4VIH0"/>
<dbReference type="KEGG" id="psa:PST_1074"/>
<dbReference type="eggNOG" id="COG0275">
    <property type="taxonomic scope" value="Bacteria"/>
</dbReference>
<dbReference type="HOGENOM" id="CLU_038422_2_0_6"/>
<dbReference type="Proteomes" id="UP000000233">
    <property type="component" value="Chromosome"/>
</dbReference>
<dbReference type="GO" id="GO:0005737">
    <property type="term" value="C:cytoplasm"/>
    <property type="evidence" value="ECO:0007669"/>
    <property type="project" value="UniProtKB-SubCell"/>
</dbReference>
<dbReference type="GO" id="GO:0071424">
    <property type="term" value="F:rRNA (cytosine-N4-)-methyltransferase activity"/>
    <property type="evidence" value="ECO:0007669"/>
    <property type="project" value="UniProtKB-UniRule"/>
</dbReference>
<dbReference type="GO" id="GO:0070475">
    <property type="term" value="P:rRNA base methylation"/>
    <property type="evidence" value="ECO:0007669"/>
    <property type="project" value="UniProtKB-UniRule"/>
</dbReference>
<dbReference type="Gene3D" id="1.10.150.170">
    <property type="entry name" value="Putative methyltransferase TM0872, insert domain"/>
    <property type="match status" value="1"/>
</dbReference>
<dbReference type="Gene3D" id="3.40.50.150">
    <property type="entry name" value="Vaccinia Virus protein VP39"/>
    <property type="match status" value="1"/>
</dbReference>
<dbReference type="HAMAP" id="MF_01007">
    <property type="entry name" value="16SrRNA_methyltr_H"/>
    <property type="match status" value="1"/>
</dbReference>
<dbReference type="InterPro" id="IPR002903">
    <property type="entry name" value="RsmH"/>
</dbReference>
<dbReference type="InterPro" id="IPR023397">
    <property type="entry name" value="SAM-dep_MeTrfase_MraW_recog"/>
</dbReference>
<dbReference type="InterPro" id="IPR029063">
    <property type="entry name" value="SAM-dependent_MTases_sf"/>
</dbReference>
<dbReference type="NCBIfam" id="TIGR00006">
    <property type="entry name" value="16S rRNA (cytosine(1402)-N(4))-methyltransferase RsmH"/>
    <property type="match status" value="1"/>
</dbReference>
<dbReference type="PANTHER" id="PTHR11265:SF0">
    <property type="entry name" value="12S RRNA N4-METHYLCYTIDINE METHYLTRANSFERASE"/>
    <property type="match status" value="1"/>
</dbReference>
<dbReference type="PANTHER" id="PTHR11265">
    <property type="entry name" value="S-ADENOSYL-METHYLTRANSFERASE MRAW"/>
    <property type="match status" value="1"/>
</dbReference>
<dbReference type="Pfam" id="PF01795">
    <property type="entry name" value="Methyltransf_5"/>
    <property type="match status" value="1"/>
</dbReference>
<dbReference type="PIRSF" id="PIRSF004486">
    <property type="entry name" value="MraW"/>
    <property type="match status" value="1"/>
</dbReference>
<dbReference type="SUPFAM" id="SSF81799">
    <property type="entry name" value="Putative methyltransferase TM0872, insert domain"/>
    <property type="match status" value="1"/>
</dbReference>
<dbReference type="SUPFAM" id="SSF53335">
    <property type="entry name" value="S-adenosyl-L-methionine-dependent methyltransferases"/>
    <property type="match status" value="1"/>
</dbReference>
<name>RSMH_STUS1</name>
<organism>
    <name type="scientific">Stutzerimonas stutzeri (strain A1501)</name>
    <name type="common">Pseudomonas stutzeri</name>
    <dbReference type="NCBI Taxonomy" id="379731"/>
    <lineage>
        <taxon>Bacteria</taxon>
        <taxon>Pseudomonadati</taxon>
        <taxon>Pseudomonadota</taxon>
        <taxon>Gammaproteobacteria</taxon>
        <taxon>Pseudomonadales</taxon>
        <taxon>Pseudomonadaceae</taxon>
        <taxon>Stutzerimonas</taxon>
    </lineage>
</organism>
<keyword id="KW-0963">Cytoplasm</keyword>
<keyword id="KW-0489">Methyltransferase</keyword>
<keyword id="KW-1185">Reference proteome</keyword>
<keyword id="KW-0698">rRNA processing</keyword>
<keyword id="KW-0949">S-adenosyl-L-methionine</keyword>
<keyword id="KW-0808">Transferase</keyword>
<accession>A4VIH0</accession>
<protein>
    <recommendedName>
        <fullName evidence="1">Ribosomal RNA small subunit methyltransferase H</fullName>
        <ecNumber evidence="1">2.1.1.199</ecNumber>
    </recommendedName>
    <alternativeName>
        <fullName evidence="1">16S rRNA m(4)C1402 methyltransferase</fullName>
    </alternativeName>
    <alternativeName>
        <fullName evidence="1">rRNA (cytosine-N(4)-)-methyltransferase RsmH</fullName>
    </alternativeName>
</protein>